<accession>A9R691</accession>
<evidence type="ECO:0000255" key="1">
    <source>
        <dbReference type="HAMAP-Rule" id="MF_00394"/>
    </source>
</evidence>
<proteinExistence type="inferred from homology"/>
<feature type="chain" id="PRO_1000123207" description="Glycerol-3-phosphate dehydrogenase [NAD(P)+]">
    <location>
        <begin position="1"/>
        <end position="339"/>
    </location>
</feature>
<feature type="active site" description="Proton acceptor" evidence="1">
    <location>
        <position position="195"/>
    </location>
</feature>
<feature type="binding site" evidence="1">
    <location>
        <position position="15"/>
    </location>
    <ligand>
        <name>NADPH</name>
        <dbReference type="ChEBI" id="CHEBI:57783"/>
    </ligand>
</feature>
<feature type="binding site" evidence="1">
    <location>
        <position position="16"/>
    </location>
    <ligand>
        <name>NADPH</name>
        <dbReference type="ChEBI" id="CHEBI:57783"/>
    </ligand>
</feature>
<feature type="binding site" evidence="1">
    <location>
        <position position="36"/>
    </location>
    <ligand>
        <name>NADPH</name>
        <dbReference type="ChEBI" id="CHEBI:57783"/>
    </ligand>
</feature>
<feature type="binding site" evidence="1">
    <location>
        <position position="110"/>
    </location>
    <ligand>
        <name>NADPH</name>
        <dbReference type="ChEBI" id="CHEBI:57783"/>
    </ligand>
</feature>
<feature type="binding site" evidence="1">
    <location>
        <position position="110"/>
    </location>
    <ligand>
        <name>sn-glycerol 3-phosphate</name>
        <dbReference type="ChEBI" id="CHEBI:57597"/>
    </ligand>
</feature>
<feature type="binding site" evidence="1">
    <location>
        <position position="139"/>
    </location>
    <ligand>
        <name>sn-glycerol 3-phosphate</name>
        <dbReference type="ChEBI" id="CHEBI:57597"/>
    </ligand>
</feature>
<feature type="binding site" evidence="1">
    <location>
        <position position="141"/>
    </location>
    <ligand>
        <name>sn-glycerol 3-phosphate</name>
        <dbReference type="ChEBI" id="CHEBI:57597"/>
    </ligand>
</feature>
<feature type="binding site" evidence="1">
    <location>
        <position position="143"/>
    </location>
    <ligand>
        <name>NADPH</name>
        <dbReference type="ChEBI" id="CHEBI:57783"/>
    </ligand>
</feature>
<feature type="binding site" evidence="1">
    <location>
        <position position="195"/>
    </location>
    <ligand>
        <name>sn-glycerol 3-phosphate</name>
        <dbReference type="ChEBI" id="CHEBI:57597"/>
    </ligand>
</feature>
<feature type="binding site" evidence="1">
    <location>
        <position position="248"/>
    </location>
    <ligand>
        <name>sn-glycerol 3-phosphate</name>
        <dbReference type="ChEBI" id="CHEBI:57597"/>
    </ligand>
</feature>
<feature type="binding site" evidence="1">
    <location>
        <position position="258"/>
    </location>
    <ligand>
        <name>sn-glycerol 3-phosphate</name>
        <dbReference type="ChEBI" id="CHEBI:57597"/>
    </ligand>
</feature>
<feature type="binding site" evidence="1">
    <location>
        <position position="259"/>
    </location>
    <ligand>
        <name>NADPH</name>
        <dbReference type="ChEBI" id="CHEBI:57783"/>
    </ligand>
</feature>
<feature type="binding site" evidence="1">
    <location>
        <position position="259"/>
    </location>
    <ligand>
        <name>sn-glycerol 3-phosphate</name>
        <dbReference type="ChEBI" id="CHEBI:57597"/>
    </ligand>
</feature>
<feature type="binding site" evidence="1">
    <location>
        <position position="260"/>
    </location>
    <ligand>
        <name>sn-glycerol 3-phosphate</name>
        <dbReference type="ChEBI" id="CHEBI:57597"/>
    </ligand>
</feature>
<feature type="binding site" evidence="1">
    <location>
        <position position="283"/>
    </location>
    <ligand>
        <name>NADPH</name>
        <dbReference type="ChEBI" id="CHEBI:57783"/>
    </ligand>
</feature>
<feature type="binding site" evidence="1">
    <location>
        <position position="285"/>
    </location>
    <ligand>
        <name>NADPH</name>
        <dbReference type="ChEBI" id="CHEBI:57783"/>
    </ligand>
</feature>
<sequence length="339" mass="36194">MNTNPASMAVIGAGSYGTALAITLARNGHQVVLWGHDPKHIQQLQQDRCNRAFLPDAAFPDTLRLETDLACALAASRDVLVVVPSHVFGAVLHQLKPHLRKDARIVWATKGLEAETGRLLQDVAREVLGEAIPLAVISGPTFAKELAAGLPTAIALASTDVQFSEDLQQLLHCGKSFRVYSNPDFIGVQLGGAVKNVIAIGAGMSDGIGFGANARTALITRGLAEMTRLGTALGADPSTFMGMAGLGDLVLTCTDNQSRNRRFGIMLGQGLGVKEAQDNIGQVVEGYRNTKEVLALAQRHGVEMPITEQIYQVLYCHKNAREAALTLLGRTKKDEKIGI</sequence>
<comment type="function">
    <text evidence="1">Catalyzes the reduction of the glycolytic intermediate dihydroxyacetone phosphate (DHAP) to sn-glycerol 3-phosphate (G3P), the key precursor for phospholipid synthesis.</text>
</comment>
<comment type="catalytic activity">
    <reaction evidence="1">
        <text>sn-glycerol 3-phosphate + NAD(+) = dihydroxyacetone phosphate + NADH + H(+)</text>
        <dbReference type="Rhea" id="RHEA:11092"/>
        <dbReference type="ChEBI" id="CHEBI:15378"/>
        <dbReference type="ChEBI" id="CHEBI:57540"/>
        <dbReference type="ChEBI" id="CHEBI:57597"/>
        <dbReference type="ChEBI" id="CHEBI:57642"/>
        <dbReference type="ChEBI" id="CHEBI:57945"/>
        <dbReference type="EC" id="1.1.1.94"/>
    </reaction>
    <physiologicalReaction direction="right-to-left" evidence="1">
        <dbReference type="Rhea" id="RHEA:11094"/>
    </physiologicalReaction>
</comment>
<comment type="catalytic activity">
    <reaction evidence="1">
        <text>sn-glycerol 3-phosphate + NADP(+) = dihydroxyacetone phosphate + NADPH + H(+)</text>
        <dbReference type="Rhea" id="RHEA:11096"/>
        <dbReference type="ChEBI" id="CHEBI:15378"/>
        <dbReference type="ChEBI" id="CHEBI:57597"/>
        <dbReference type="ChEBI" id="CHEBI:57642"/>
        <dbReference type="ChEBI" id="CHEBI:57783"/>
        <dbReference type="ChEBI" id="CHEBI:58349"/>
        <dbReference type="EC" id="1.1.1.94"/>
    </reaction>
    <physiologicalReaction direction="right-to-left" evidence="1">
        <dbReference type="Rhea" id="RHEA:11098"/>
    </physiologicalReaction>
</comment>
<comment type="pathway">
    <text evidence="1">Membrane lipid metabolism; glycerophospholipid metabolism.</text>
</comment>
<comment type="subcellular location">
    <subcellularLocation>
        <location evidence="1">Cytoplasm</location>
    </subcellularLocation>
</comment>
<comment type="similarity">
    <text evidence="1">Belongs to the NAD-dependent glycerol-3-phosphate dehydrogenase family.</text>
</comment>
<dbReference type="EC" id="1.1.1.94" evidence="1"/>
<dbReference type="EMBL" id="CP000901">
    <property type="protein sequence ID" value="ABX86514.1"/>
    <property type="molecule type" value="Genomic_DNA"/>
</dbReference>
<dbReference type="RefSeq" id="WP_002208975.1">
    <property type="nucleotide sequence ID" value="NZ_CP009935.1"/>
</dbReference>
<dbReference type="SMR" id="A9R691"/>
<dbReference type="GeneID" id="57974523"/>
<dbReference type="KEGG" id="ypg:YpAngola_A0073"/>
<dbReference type="PATRIC" id="fig|349746.12.peg.1017"/>
<dbReference type="UniPathway" id="UPA00940"/>
<dbReference type="GO" id="GO:0005829">
    <property type="term" value="C:cytosol"/>
    <property type="evidence" value="ECO:0007669"/>
    <property type="project" value="TreeGrafter"/>
</dbReference>
<dbReference type="GO" id="GO:0047952">
    <property type="term" value="F:glycerol-3-phosphate dehydrogenase [NAD(P)+] activity"/>
    <property type="evidence" value="ECO:0007669"/>
    <property type="project" value="UniProtKB-UniRule"/>
</dbReference>
<dbReference type="GO" id="GO:0051287">
    <property type="term" value="F:NAD binding"/>
    <property type="evidence" value="ECO:0007669"/>
    <property type="project" value="InterPro"/>
</dbReference>
<dbReference type="GO" id="GO:0005975">
    <property type="term" value="P:carbohydrate metabolic process"/>
    <property type="evidence" value="ECO:0007669"/>
    <property type="project" value="InterPro"/>
</dbReference>
<dbReference type="GO" id="GO:0046167">
    <property type="term" value="P:glycerol-3-phosphate biosynthetic process"/>
    <property type="evidence" value="ECO:0007669"/>
    <property type="project" value="UniProtKB-UniRule"/>
</dbReference>
<dbReference type="GO" id="GO:0046168">
    <property type="term" value="P:glycerol-3-phosphate catabolic process"/>
    <property type="evidence" value="ECO:0007669"/>
    <property type="project" value="InterPro"/>
</dbReference>
<dbReference type="GO" id="GO:0046474">
    <property type="term" value="P:glycerophospholipid biosynthetic process"/>
    <property type="evidence" value="ECO:0007669"/>
    <property type="project" value="TreeGrafter"/>
</dbReference>
<dbReference type="FunFam" id="1.10.1040.10:FF:000001">
    <property type="entry name" value="Glycerol-3-phosphate dehydrogenase [NAD(P)+]"/>
    <property type="match status" value="1"/>
</dbReference>
<dbReference type="FunFam" id="3.40.50.720:FF:000019">
    <property type="entry name" value="Glycerol-3-phosphate dehydrogenase [NAD(P)+]"/>
    <property type="match status" value="1"/>
</dbReference>
<dbReference type="Gene3D" id="1.10.1040.10">
    <property type="entry name" value="N-(1-d-carboxylethyl)-l-norvaline Dehydrogenase, domain 2"/>
    <property type="match status" value="1"/>
</dbReference>
<dbReference type="Gene3D" id="3.40.50.720">
    <property type="entry name" value="NAD(P)-binding Rossmann-like Domain"/>
    <property type="match status" value="1"/>
</dbReference>
<dbReference type="HAMAP" id="MF_00394">
    <property type="entry name" value="NAD_Glyc3P_dehydrog"/>
    <property type="match status" value="1"/>
</dbReference>
<dbReference type="InterPro" id="IPR008927">
    <property type="entry name" value="6-PGluconate_DH-like_C_sf"/>
</dbReference>
<dbReference type="InterPro" id="IPR013328">
    <property type="entry name" value="6PGD_dom2"/>
</dbReference>
<dbReference type="InterPro" id="IPR006168">
    <property type="entry name" value="G3P_DH_NAD-dep"/>
</dbReference>
<dbReference type="InterPro" id="IPR006109">
    <property type="entry name" value="G3P_DH_NAD-dep_C"/>
</dbReference>
<dbReference type="InterPro" id="IPR011128">
    <property type="entry name" value="G3P_DH_NAD-dep_N"/>
</dbReference>
<dbReference type="InterPro" id="IPR036291">
    <property type="entry name" value="NAD(P)-bd_dom_sf"/>
</dbReference>
<dbReference type="NCBIfam" id="NF000939">
    <property type="entry name" value="PRK00094.1-1"/>
    <property type="match status" value="1"/>
</dbReference>
<dbReference type="NCBIfam" id="NF000940">
    <property type="entry name" value="PRK00094.1-2"/>
    <property type="match status" value="1"/>
</dbReference>
<dbReference type="NCBIfam" id="NF000942">
    <property type="entry name" value="PRK00094.1-4"/>
    <property type="match status" value="1"/>
</dbReference>
<dbReference type="PANTHER" id="PTHR11728">
    <property type="entry name" value="GLYCEROL-3-PHOSPHATE DEHYDROGENASE"/>
    <property type="match status" value="1"/>
</dbReference>
<dbReference type="PANTHER" id="PTHR11728:SF1">
    <property type="entry name" value="GLYCEROL-3-PHOSPHATE DEHYDROGENASE [NAD(+)] 2, CHLOROPLASTIC"/>
    <property type="match status" value="1"/>
</dbReference>
<dbReference type="Pfam" id="PF07479">
    <property type="entry name" value="NAD_Gly3P_dh_C"/>
    <property type="match status" value="1"/>
</dbReference>
<dbReference type="Pfam" id="PF01210">
    <property type="entry name" value="NAD_Gly3P_dh_N"/>
    <property type="match status" value="1"/>
</dbReference>
<dbReference type="PIRSF" id="PIRSF000114">
    <property type="entry name" value="Glycerol-3-P_dh"/>
    <property type="match status" value="1"/>
</dbReference>
<dbReference type="PRINTS" id="PR00077">
    <property type="entry name" value="GPDHDRGNASE"/>
</dbReference>
<dbReference type="SUPFAM" id="SSF48179">
    <property type="entry name" value="6-phosphogluconate dehydrogenase C-terminal domain-like"/>
    <property type="match status" value="1"/>
</dbReference>
<dbReference type="SUPFAM" id="SSF51735">
    <property type="entry name" value="NAD(P)-binding Rossmann-fold domains"/>
    <property type="match status" value="1"/>
</dbReference>
<dbReference type="PROSITE" id="PS00957">
    <property type="entry name" value="NAD_G3PDH"/>
    <property type="match status" value="1"/>
</dbReference>
<name>GPDA_YERPG</name>
<reference key="1">
    <citation type="journal article" date="2010" name="J. Bacteriol.">
        <title>Genome sequence of the deep-rooted Yersinia pestis strain Angola reveals new insights into the evolution and pangenome of the plague bacterium.</title>
        <authorList>
            <person name="Eppinger M."/>
            <person name="Worsham P.L."/>
            <person name="Nikolich M.P."/>
            <person name="Riley D.R."/>
            <person name="Sebastian Y."/>
            <person name="Mou S."/>
            <person name="Achtman M."/>
            <person name="Lindler L.E."/>
            <person name="Ravel J."/>
        </authorList>
    </citation>
    <scope>NUCLEOTIDE SEQUENCE [LARGE SCALE GENOMIC DNA]</scope>
    <source>
        <strain>Angola</strain>
    </source>
</reference>
<protein>
    <recommendedName>
        <fullName evidence="1">Glycerol-3-phosphate dehydrogenase [NAD(P)+]</fullName>
        <ecNumber evidence="1">1.1.1.94</ecNumber>
    </recommendedName>
    <alternativeName>
        <fullName evidence="1">NAD(P)(+)-dependent glycerol-3-phosphate dehydrogenase</fullName>
    </alternativeName>
    <alternativeName>
        <fullName evidence="1">NAD(P)H-dependent dihydroxyacetone-phosphate reductase</fullName>
    </alternativeName>
</protein>
<keyword id="KW-0963">Cytoplasm</keyword>
<keyword id="KW-0444">Lipid biosynthesis</keyword>
<keyword id="KW-0443">Lipid metabolism</keyword>
<keyword id="KW-0520">NAD</keyword>
<keyword id="KW-0521">NADP</keyword>
<keyword id="KW-0547">Nucleotide-binding</keyword>
<keyword id="KW-0560">Oxidoreductase</keyword>
<keyword id="KW-0594">Phospholipid biosynthesis</keyword>
<keyword id="KW-1208">Phospholipid metabolism</keyword>
<gene>
    <name evidence="1" type="primary">gpsA</name>
    <name type="ordered locus">YpAngola_A0073</name>
</gene>
<organism>
    <name type="scientific">Yersinia pestis bv. Antiqua (strain Angola)</name>
    <dbReference type="NCBI Taxonomy" id="349746"/>
    <lineage>
        <taxon>Bacteria</taxon>
        <taxon>Pseudomonadati</taxon>
        <taxon>Pseudomonadota</taxon>
        <taxon>Gammaproteobacteria</taxon>
        <taxon>Enterobacterales</taxon>
        <taxon>Yersiniaceae</taxon>
        <taxon>Yersinia</taxon>
    </lineage>
</organism>